<evidence type="ECO:0000250" key="1">
    <source>
        <dbReference type="UniProtKB" id="A0A0F6B5X4"/>
    </source>
</evidence>
<evidence type="ECO:0000255" key="2">
    <source>
        <dbReference type="PROSITE-ProRule" id="PRU00532"/>
    </source>
</evidence>
<evidence type="ECO:0000256" key="3">
    <source>
        <dbReference type="SAM" id="MobiDB-lite"/>
    </source>
</evidence>
<evidence type="ECO:0000269" key="4">
    <source>
    </source>
</evidence>
<evidence type="ECO:0000303" key="5">
    <source>
    </source>
</evidence>
<evidence type="ECO:0000305" key="6"/>
<evidence type="ECO:0000312" key="7">
    <source>
        <dbReference type="EMBL" id="CCP43667.1"/>
    </source>
</evidence>
<reference evidence="7" key="1">
    <citation type="journal article" date="1998" name="Nature">
        <title>Deciphering the biology of Mycobacterium tuberculosis from the complete genome sequence.</title>
        <authorList>
            <person name="Cole S.T."/>
            <person name="Brosch R."/>
            <person name="Parkhill J."/>
            <person name="Garnier T."/>
            <person name="Churcher C.M."/>
            <person name="Harris D.E."/>
            <person name="Gordon S.V."/>
            <person name="Eiglmeier K."/>
            <person name="Gas S."/>
            <person name="Barry C.E. III"/>
            <person name="Tekaia F."/>
            <person name="Badcock K."/>
            <person name="Basham D."/>
            <person name="Brown D."/>
            <person name="Chillingworth T."/>
            <person name="Connor R."/>
            <person name="Davies R.M."/>
            <person name="Devlin K."/>
            <person name="Feltwell T."/>
            <person name="Gentles S."/>
            <person name="Hamlin N."/>
            <person name="Holroyd S."/>
            <person name="Hornsby T."/>
            <person name="Jagels K."/>
            <person name="Krogh A."/>
            <person name="McLean J."/>
            <person name="Moule S."/>
            <person name="Murphy L.D."/>
            <person name="Oliver S."/>
            <person name="Osborne J."/>
            <person name="Quail M.A."/>
            <person name="Rajandream M.A."/>
            <person name="Rogers J."/>
            <person name="Rutter S."/>
            <person name="Seeger K."/>
            <person name="Skelton S."/>
            <person name="Squares S."/>
            <person name="Squares R."/>
            <person name="Sulston J.E."/>
            <person name="Taylor K."/>
            <person name="Whitehead S."/>
            <person name="Barrell B.G."/>
        </authorList>
    </citation>
    <scope>NUCLEOTIDE SEQUENCE [LARGE SCALE GENOMIC DNA]</scope>
    <source>
        <strain>ATCC 25618 / H37Rv</strain>
    </source>
</reference>
<reference key="2">
    <citation type="journal article" date="2011" name="Mol. Cell. Proteomics">
        <title>Proteogenomic analysis of Mycobacterium tuberculosis by high resolution mass spectrometry.</title>
        <authorList>
            <person name="Kelkar D.S."/>
            <person name="Kumar D."/>
            <person name="Kumar P."/>
            <person name="Balakrishnan L."/>
            <person name="Muthusamy B."/>
            <person name="Yadav A.K."/>
            <person name="Shrivastava P."/>
            <person name="Marimuthu A."/>
            <person name="Anand S."/>
            <person name="Sundaram H."/>
            <person name="Kingsbury R."/>
            <person name="Harsha H.C."/>
            <person name="Nair B."/>
            <person name="Prasad T.S."/>
            <person name="Chauhan D.S."/>
            <person name="Katoch K."/>
            <person name="Katoch V.M."/>
            <person name="Kumar P."/>
            <person name="Chaerkady R."/>
            <person name="Ramachandran S."/>
            <person name="Dash D."/>
            <person name="Pandey A."/>
        </authorList>
    </citation>
    <scope>IDENTIFICATION BY MASS SPECTROMETRY [LARGE SCALE ANALYSIS]</scope>
    <source>
        <strain>ATCC 25618 / H37Rv</strain>
    </source>
</reference>
<reference key="3">
    <citation type="journal article" date="2022" name="Microbiol. Spectr.">
        <title>A tRNA-Acetylating Toxin and Detoxifying Enzyme in Mycobacterium tuberculosis.</title>
        <authorList>
            <person name="Tomasi F.G."/>
            <person name="Hall A.M.J."/>
            <person name="Schweber J.T.P."/>
            <person name="Dulberger C.L."/>
            <person name="McGowen K."/>
            <person name="Liu Q."/>
            <person name="Fortune S.M."/>
            <person name="Helaine S."/>
            <person name="Rubin E.J."/>
        </authorList>
    </citation>
    <scope>FUNCTION</scope>
    <scope>CATALYTIC ACTIVITY</scope>
    <scope>OPERON STRUCTURE</scope>
    <scope>DISRUPTION PHENOTYPE</scope>
    <scope>MUTAGENESIS OF ALA-91 AND TYR-138</scope>
    <source>
        <strain>ATCC 25618 / H37Rv</strain>
    </source>
</reference>
<dbReference type="EC" id="2.3.1.-" evidence="4"/>
<dbReference type="EMBL" id="AL123456">
    <property type="protein sequence ID" value="CCP43667.1"/>
    <property type="molecule type" value="Genomic_DNA"/>
</dbReference>
<dbReference type="RefSeq" id="NP_215434.1">
    <property type="nucleotide sequence ID" value="NC_000962.3"/>
</dbReference>
<dbReference type="RefSeq" id="WP_003404756.1">
    <property type="nucleotide sequence ID" value="NZ_NVQJ01000001.1"/>
</dbReference>
<dbReference type="SMR" id="I6XA42"/>
<dbReference type="STRING" id="83332.Rv0919"/>
<dbReference type="PaxDb" id="83332-Rv0919"/>
<dbReference type="DNASU" id="885221"/>
<dbReference type="GeneID" id="885221"/>
<dbReference type="KEGG" id="mtu:Rv0919"/>
<dbReference type="KEGG" id="mtv:RVBD_0919"/>
<dbReference type="PATRIC" id="fig|83332.111.peg.1019"/>
<dbReference type="TubercuList" id="Rv0919"/>
<dbReference type="eggNOG" id="COG0454">
    <property type="taxonomic scope" value="Bacteria"/>
</dbReference>
<dbReference type="InParanoid" id="I6XA42"/>
<dbReference type="OrthoDB" id="9799147at2"/>
<dbReference type="PhylomeDB" id="I6XA42"/>
<dbReference type="Proteomes" id="UP000001584">
    <property type="component" value="Chromosome"/>
</dbReference>
<dbReference type="GO" id="GO:0016747">
    <property type="term" value="F:acyltransferase activity, transferring groups other than amino-acyl groups"/>
    <property type="evidence" value="ECO:0007669"/>
    <property type="project" value="InterPro"/>
</dbReference>
<dbReference type="GO" id="GO:0000049">
    <property type="term" value="F:tRNA binding"/>
    <property type="evidence" value="ECO:0007669"/>
    <property type="project" value="UniProtKB-KW"/>
</dbReference>
<dbReference type="CDD" id="cd04301">
    <property type="entry name" value="NAT_SF"/>
    <property type="match status" value="1"/>
</dbReference>
<dbReference type="Gene3D" id="3.40.630.30">
    <property type="match status" value="1"/>
</dbReference>
<dbReference type="InterPro" id="IPR016181">
    <property type="entry name" value="Acyl_CoA_acyltransferase"/>
</dbReference>
<dbReference type="InterPro" id="IPR000182">
    <property type="entry name" value="GNAT_dom"/>
</dbReference>
<dbReference type="PANTHER" id="PTHR36449:SF1">
    <property type="entry name" value="ACETYLTRANSFERASE"/>
    <property type="match status" value="1"/>
</dbReference>
<dbReference type="PANTHER" id="PTHR36449">
    <property type="entry name" value="ACETYLTRANSFERASE-RELATED"/>
    <property type="match status" value="1"/>
</dbReference>
<dbReference type="Pfam" id="PF00583">
    <property type="entry name" value="Acetyltransf_1"/>
    <property type="match status" value="1"/>
</dbReference>
<dbReference type="SUPFAM" id="SSF55729">
    <property type="entry name" value="Acyl-CoA N-acyltransferases (Nat)"/>
    <property type="match status" value="1"/>
</dbReference>
<dbReference type="PROSITE" id="PS51186">
    <property type="entry name" value="GNAT"/>
    <property type="match status" value="1"/>
</dbReference>
<proteinExistence type="evidence at protein level"/>
<accession>I6XA42</accession>
<protein>
    <recommendedName>
        <fullName evidence="5">tRNA-acetylating toxin</fullName>
        <shortName evidence="5">TacT</shortName>
        <ecNumber evidence="4">2.3.1.-</ecNumber>
    </recommendedName>
</protein>
<gene>
    <name evidence="5" type="primary">tacT</name>
    <name evidence="7" type="ordered locus">Rv0919</name>
</gene>
<sequence length="166" mass="18081">MSGYSAPRRISDADDVTSFSSGEPSLDDYLRKRALANHVQGGSRCFVTCRDGRVVGFYALASGSVAHADAPGRVRRNMPDPVPVILLSRLAVDRKEQGRGLGSHLLRDAIGRCVQAADSIGLRAILVHALHDEARAFYVHFDFEISPTDPLHLMLLMKDARALIGD</sequence>
<feature type="chain" id="PRO_0000461699" description="tRNA-acetylating toxin">
    <location>
        <begin position="1"/>
        <end position="166"/>
    </location>
</feature>
<feature type="domain" description="N-acetyltransferase" evidence="2">
    <location>
        <begin position="1"/>
        <end position="162"/>
    </location>
</feature>
<feature type="region of interest" description="Disordered" evidence="3">
    <location>
        <begin position="1"/>
        <end position="22"/>
    </location>
</feature>
<feature type="active site" evidence="6">
    <location>
        <position position="138"/>
    </location>
</feature>
<feature type="mutagenesis site" description="No longer blocks in vitro translation; when associated with F-138." evidence="4">
    <original>A</original>
    <variation>P</variation>
    <location>
        <position position="91"/>
    </location>
</feature>
<feature type="mutagenesis site" description="Decreased blockage of in vitro translation. Loss of blockage; when associated with P-91." evidence="4">
    <original>Y</original>
    <variation>F</variation>
    <location>
        <position position="138"/>
    </location>
</feature>
<name>TACT_MYCTU</name>
<comment type="function">
    <text evidence="4">Toxic component of a type II toxin-antitoxin (TA) system. Overexpression of this gene alone in M.smegmatis inhibits growth, while overexpression of the tacA-tacT operon does not. Acetylates glycyl-tRNA(Gly) but not other tRNAs, blocks in vitro translation in the presence, but not absence, of acetyl-coenzyme A. Peptidyl-tRNA hydrolase (pth) counteracts the product of this enzyme in vitro. Neutralized by cognate antitoxin TacA. Does not seem to be active in laboratory growth conditions.</text>
</comment>
<comment type="function">
    <text evidence="1">TacA-TacT both represses and derepresses expression of its own operon.</text>
</comment>
<comment type="catalytic activity">
    <reaction evidence="4">
        <text>glycyl-tRNA(Gly) + acetyl-CoA = N-acetylglycyl-tRNA(Gly) + CoA + H(+)</text>
        <dbReference type="Rhea" id="RHEA:81867"/>
        <dbReference type="Rhea" id="RHEA-COMP:9683"/>
        <dbReference type="Rhea" id="RHEA-COMP:19766"/>
        <dbReference type="ChEBI" id="CHEBI:15378"/>
        <dbReference type="ChEBI" id="CHEBI:57287"/>
        <dbReference type="ChEBI" id="CHEBI:57288"/>
        <dbReference type="ChEBI" id="CHEBI:78522"/>
        <dbReference type="ChEBI" id="CHEBI:232036"/>
    </reaction>
</comment>
<comment type="subunit">
    <text evidence="1">Homodimer, forms a complex with cognate antitoxin TacA.</text>
</comment>
<comment type="induction">
    <text evidence="4">Part of the probable tacA-tacT operon.</text>
</comment>
<comment type="disruption phenotype">
    <text evidence="4">The tacA-tacT operon is non-essential and can be deleted without an effect on growth in cell culture.</text>
</comment>
<comment type="similarity">
    <text evidence="6">Belongs to the acetyltransferase family. GNAT subfamily.</text>
</comment>
<organism>
    <name type="scientific">Mycobacterium tuberculosis (strain ATCC 25618 / H37Rv)</name>
    <dbReference type="NCBI Taxonomy" id="83332"/>
    <lineage>
        <taxon>Bacteria</taxon>
        <taxon>Bacillati</taxon>
        <taxon>Actinomycetota</taxon>
        <taxon>Actinomycetes</taxon>
        <taxon>Mycobacteriales</taxon>
        <taxon>Mycobacteriaceae</taxon>
        <taxon>Mycobacterium</taxon>
        <taxon>Mycobacterium tuberculosis complex</taxon>
    </lineage>
</organism>
<keyword id="KW-0012">Acyltransferase</keyword>
<keyword id="KW-1185">Reference proteome</keyword>
<keyword id="KW-0678">Repressor</keyword>
<keyword id="KW-0694">RNA-binding</keyword>
<keyword id="KW-1277">Toxin-antitoxin system</keyword>
<keyword id="KW-0804">Transcription</keyword>
<keyword id="KW-0805">Transcription regulation</keyword>
<keyword id="KW-0808">Transferase</keyword>
<keyword id="KW-0820">tRNA-binding</keyword>